<comment type="subcellular location">
    <subcellularLocation>
        <location evidence="1">Secreted</location>
    </subcellularLocation>
</comment>
<comment type="tissue specificity">
    <text>Expressed by the venom gland.</text>
</comment>
<comment type="domain">
    <text evidence="1">The presence of a 'disulfide through disulfide knot' structurally defines this protein as a knottin.</text>
</comment>
<comment type="similarity">
    <text evidence="3">Belongs to the neurotoxin 19 (CSTX) family. 01 subfamily.</text>
</comment>
<accession>B6DCP7</accession>
<keyword id="KW-1015">Disulfide bond</keyword>
<keyword id="KW-0960">Knottin</keyword>
<keyword id="KW-0964">Secreted</keyword>
<keyword id="KW-0732">Signal</keyword>
<keyword id="KW-0800">Toxin</keyword>
<organism>
    <name type="scientific">Lycosa singoriensis</name>
    <name type="common">Wolf spider</name>
    <name type="synonym">Aranea singoriensis</name>
    <dbReference type="NCBI Taxonomy" id="434756"/>
    <lineage>
        <taxon>Eukaryota</taxon>
        <taxon>Metazoa</taxon>
        <taxon>Ecdysozoa</taxon>
        <taxon>Arthropoda</taxon>
        <taxon>Chelicerata</taxon>
        <taxon>Arachnida</taxon>
        <taxon>Araneae</taxon>
        <taxon>Araneomorphae</taxon>
        <taxon>Entelegynae</taxon>
        <taxon>Lycosoidea</taxon>
        <taxon>Lycosidae</taxon>
        <taxon>Lycosa</taxon>
    </lineage>
</organism>
<protein>
    <recommendedName>
        <fullName>U3-lycotoxin-Ls1x</fullName>
    </recommendedName>
    <alternativeName>
        <fullName>Toxin-like structure LSTX-B2</fullName>
    </alternativeName>
</protein>
<name>TX302_LYCSI</name>
<dbReference type="EMBL" id="EU925981">
    <property type="protein sequence ID" value="ACI41313.1"/>
    <property type="molecule type" value="mRNA"/>
</dbReference>
<dbReference type="EMBL" id="FM863985">
    <property type="protein sequence ID" value="CAS03583.1"/>
    <property type="molecule type" value="mRNA"/>
</dbReference>
<dbReference type="SMR" id="B6DCP7"/>
<dbReference type="ArachnoServer" id="AS000930">
    <property type="toxin name" value="U3-lycotoxin-Ls1x"/>
</dbReference>
<dbReference type="GO" id="GO:0005576">
    <property type="term" value="C:extracellular region"/>
    <property type="evidence" value="ECO:0007669"/>
    <property type="project" value="UniProtKB-SubCell"/>
</dbReference>
<dbReference type="GO" id="GO:0090729">
    <property type="term" value="F:toxin activity"/>
    <property type="evidence" value="ECO:0007669"/>
    <property type="project" value="UniProtKB-KW"/>
</dbReference>
<dbReference type="InterPro" id="IPR019553">
    <property type="entry name" value="Spider_toxin_CSTX_knottin"/>
</dbReference>
<dbReference type="InterPro" id="IPR011142">
    <property type="entry name" value="Spider_toxin_CSTX_Knottin_CS"/>
</dbReference>
<dbReference type="Pfam" id="PF10530">
    <property type="entry name" value="Toxin_35"/>
    <property type="match status" value="1"/>
</dbReference>
<dbReference type="PROSITE" id="PS60029">
    <property type="entry name" value="SPIDER_CSTX"/>
    <property type="match status" value="1"/>
</dbReference>
<reference key="1">
    <citation type="journal article" date="2010" name="Zoology">
        <title>Transcriptome analysis of the venom glands of the Chinese wolf spider Lycosa singoriensis.</title>
        <authorList>
            <person name="Zhang Y."/>
            <person name="Chen J."/>
            <person name="Tang X."/>
            <person name="Wang F."/>
            <person name="Jiang L."/>
            <person name="Xiong X."/>
            <person name="Wang M."/>
            <person name="Rong M."/>
            <person name="Liu Z."/>
            <person name="Liang S."/>
        </authorList>
    </citation>
    <scope>NUCLEOTIDE SEQUENCE [LARGE SCALE MRNA]</scope>
    <source>
        <tissue>Venom gland</tissue>
    </source>
</reference>
<proteinExistence type="evidence at transcript level"/>
<evidence type="ECO:0000250" key="1"/>
<evidence type="ECO:0000255" key="2"/>
<evidence type="ECO:0000305" key="3"/>
<feature type="signal peptide" evidence="2">
    <location>
        <begin position="1"/>
        <end position="20"/>
    </location>
</feature>
<feature type="propeptide" id="PRO_0000401611" evidence="1">
    <location>
        <begin position="21"/>
        <end position="44"/>
    </location>
</feature>
<feature type="chain" id="PRO_0000401612" description="U3-lycotoxin-Ls1x">
    <location>
        <begin position="45"/>
        <end position="109"/>
    </location>
</feature>
<feature type="disulfide bond" evidence="1">
    <location>
        <begin position="48"/>
        <end position="63"/>
    </location>
</feature>
<feature type="disulfide bond" evidence="1">
    <location>
        <begin position="55"/>
        <end position="72"/>
    </location>
</feature>
<feature type="disulfide bond" evidence="1">
    <location>
        <begin position="62"/>
        <end position="88"/>
    </location>
</feature>
<feature type="disulfide bond" evidence="1">
    <location>
        <begin position="74"/>
        <end position="86"/>
    </location>
</feature>
<sequence>MKFVLLFGVLLVTLFSYSSAEMLDDFDQADEDELLSLIEKEEARAKECTPRFYDCSHDRHSCCRSELFKDVCTCFYPEGGDNKEVCTCQQPKHLKYMEKATDKIKNLFG</sequence>